<keyword id="KW-1003">Cell membrane</keyword>
<keyword id="KW-1015">Disulfide bond</keyword>
<keyword id="KW-0249">Electron transport</keyword>
<keyword id="KW-0449">Lipoprotein</keyword>
<keyword id="KW-0472">Membrane</keyword>
<keyword id="KW-0519">Myristate</keyword>
<keyword id="KW-0564">Palmitate</keyword>
<keyword id="KW-0597">Phosphoprotein</keyword>
<keyword id="KW-0676">Redox-active center</keyword>
<keyword id="KW-1185">Reference proteome</keyword>
<keyword id="KW-0813">Transport</keyword>
<name>TRXH9_ARATH</name>
<comment type="function">
    <text evidence="3">Probable thiol-disulfide oxidoreductase that may play a role in intercellular communication due to its ability to move from cell to cell.</text>
</comment>
<comment type="interaction">
    <interactant intactId="EBI-4466064">
        <id>Q9C9Y6</id>
    </interactant>
    <interactant intactId="EBI-25512418">
        <id>Q3E9D5</id>
        <label>SAMDC4</label>
    </interactant>
    <organismsDiffer>false</organismsDiffer>
    <experiments>3</experiments>
</comment>
<comment type="subcellular location">
    <subcellularLocation>
        <location evidence="3">Cell membrane</location>
    </subcellularLocation>
</comment>
<comment type="tissue specificity">
    <text>Ubiquitous.</text>
</comment>
<comment type="disruption phenotype">
    <text evidence="3">Dwarf plants with short roots and small yellowish leaves.</text>
</comment>
<comment type="similarity">
    <text evidence="4">Belongs to the thioredoxin family. Plant H-type subfamily.</text>
</comment>
<evidence type="ECO:0000250" key="1"/>
<evidence type="ECO:0000255" key="2">
    <source>
        <dbReference type="PROSITE-ProRule" id="PRU00691"/>
    </source>
</evidence>
<evidence type="ECO:0000269" key="3">
    <source>
    </source>
</evidence>
<evidence type="ECO:0000305" key="4"/>
<evidence type="ECO:0000305" key="5">
    <source>
    </source>
</evidence>
<evidence type="ECO:0007744" key="6">
    <source>
    </source>
</evidence>
<evidence type="ECO:0007744" key="7">
    <source>
    </source>
</evidence>
<evidence type="ECO:0007744" key="8">
    <source>
    </source>
</evidence>
<evidence type="ECO:0007744" key="9">
    <source>
    </source>
</evidence>
<sequence length="140" mass="15334">MGSCVSKGKGDDDSVHNVEFSGGNVHLITTKESWDDKLAEADRDGKIVVANFSATWCGPCKIVAPFFIELSEKHSSLMFLLVDVDELSDFSSSWDIKATPTFFFLKNGQQIGKLVGANKPELQKKVTSIIDSVPESPQRP</sequence>
<feature type="initiator methionine" description="Removed" evidence="5">
    <location>
        <position position="1"/>
    </location>
</feature>
<feature type="chain" id="PRO_0000326466" description="Thioredoxin H9">
    <location>
        <begin position="2"/>
        <end position="140"/>
    </location>
</feature>
<feature type="domain" description="Thioredoxin" evidence="2">
    <location>
        <begin position="25"/>
        <end position="129"/>
    </location>
</feature>
<feature type="active site" description="Nucleophile" evidence="1">
    <location>
        <position position="57"/>
    </location>
</feature>
<feature type="active site" description="Nucleophile" evidence="1">
    <location>
        <position position="60"/>
    </location>
</feature>
<feature type="site" description="Contributes to redox potential value" evidence="1">
    <location>
        <position position="58"/>
    </location>
</feature>
<feature type="site" description="Contributes to redox potential value" evidence="1">
    <location>
        <position position="59"/>
    </location>
</feature>
<feature type="modified residue" description="Phosphoserine" evidence="7 9">
    <location>
        <position position="14"/>
    </location>
</feature>
<feature type="modified residue" description="Phosphoserine" evidence="6 8 9">
    <location>
        <position position="136"/>
    </location>
</feature>
<feature type="lipid moiety-binding region" description="N-myristoyl glycine" evidence="5">
    <location>
        <position position="2"/>
    </location>
</feature>
<feature type="lipid moiety-binding region" description="S-palmitoyl cysteine" evidence="5">
    <location>
        <position position="4"/>
    </location>
</feature>
<feature type="disulfide bond" description="Redox-active" evidence="2">
    <location>
        <begin position="57"/>
        <end position="60"/>
    </location>
</feature>
<feature type="mutagenesis site" description="Loss of membrane localization. Loss of cell to cell movement." evidence="3">
    <original>G</original>
    <variation>A</variation>
    <location>
        <position position="2"/>
    </location>
</feature>
<feature type="mutagenesis site" description="No effect on membrane localization. Loss of cell to cell movement." evidence="3">
    <original>C</original>
    <variation>W</variation>
    <location>
        <position position="4"/>
    </location>
</feature>
<gene>
    <name type="primary">TRX9</name>
    <name type="synonym">ATH9</name>
    <name type="ordered locus">At3g08710</name>
    <name type="ORF">F17O14.18</name>
</gene>
<protein>
    <recommendedName>
        <fullName>Thioredoxin H9</fullName>
        <shortName>AtTrxh9</shortName>
    </recommendedName>
    <alternativeName>
        <fullName>Thioredoxin 9</fullName>
        <shortName>AtTRX9</shortName>
    </alternativeName>
</protein>
<proteinExistence type="evidence at protein level"/>
<accession>Q9C9Y6</accession>
<organism>
    <name type="scientific">Arabidopsis thaliana</name>
    <name type="common">Mouse-ear cress</name>
    <dbReference type="NCBI Taxonomy" id="3702"/>
    <lineage>
        <taxon>Eukaryota</taxon>
        <taxon>Viridiplantae</taxon>
        <taxon>Streptophyta</taxon>
        <taxon>Embryophyta</taxon>
        <taxon>Tracheophyta</taxon>
        <taxon>Spermatophyta</taxon>
        <taxon>Magnoliopsida</taxon>
        <taxon>eudicotyledons</taxon>
        <taxon>Gunneridae</taxon>
        <taxon>Pentapetalae</taxon>
        <taxon>rosids</taxon>
        <taxon>malvids</taxon>
        <taxon>Brassicales</taxon>
        <taxon>Brassicaceae</taxon>
        <taxon>Camelineae</taxon>
        <taxon>Arabidopsis</taxon>
    </lineage>
</organism>
<dbReference type="EMBL" id="AC012562">
    <property type="protein sequence ID" value="AAG51342.1"/>
    <property type="molecule type" value="Genomic_DNA"/>
</dbReference>
<dbReference type="EMBL" id="CP002686">
    <property type="protein sequence ID" value="AEE74667.1"/>
    <property type="molecule type" value="Genomic_DNA"/>
</dbReference>
<dbReference type="EMBL" id="CP002686">
    <property type="protein sequence ID" value="AEE74668.1"/>
    <property type="molecule type" value="Genomic_DNA"/>
</dbReference>
<dbReference type="EMBL" id="CP002686">
    <property type="protein sequence ID" value="ANM63932.1"/>
    <property type="molecule type" value="Genomic_DNA"/>
</dbReference>
<dbReference type="EMBL" id="AK226711">
    <property type="protein sequence ID" value="BAE98817.1"/>
    <property type="molecule type" value="mRNA"/>
</dbReference>
<dbReference type="EMBL" id="BT011728">
    <property type="protein sequence ID" value="AAS49091.1"/>
    <property type="molecule type" value="mRNA"/>
</dbReference>
<dbReference type="RefSeq" id="NP_001078124.1">
    <property type="nucleotide sequence ID" value="NM_001084655.2"/>
</dbReference>
<dbReference type="RefSeq" id="NP_001325992.1">
    <property type="nucleotide sequence ID" value="NM_001337765.1"/>
</dbReference>
<dbReference type="RefSeq" id="NP_187483.1">
    <property type="nucleotide sequence ID" value="NM_111705.4"/>
</dbReference>
<dbReference type="SMR" id="Q9C9Y6"/>
<dbReference type="BioGRID" id="5353">
    <property type="interactions" value="6"/>
</dbReference>
<dbReference type="FunCoup" id="Q9C9Y6">
    <property type="interactions" value="1893"/>
</dbReference>
<dbReference type="IntAct" id="Q9C9Y6">
    <property type="interactions" value="6"/>
</dbReference>
<dbReference type="STRING" id="3702.Q9C9Y6"/>
<dbReference type="iPTMnet" id="Q9C9Y6"/>
<dbReference type="SwissPalm" id="Q9C9Y6"/>
<dbReference type="PaxDb" id="3702-AT3G08710.1"/>
<dbReference type="ProteomicsDB" id="232394"/>
<dbReference type="EnsemblPlants" id="AT3G08710.1">
    <property type="protein sequence ID" value="AT3G08710.1"/>
    <property type="gene ID" value="AT3G08710"/>
</dbReference>
<dbReference type="EnsemblPlants" id="AT3G08710.2">
    <property type="protein sequence ID" value="AT3G08710.2"/>
    <property type="gene ID" value="AT3G08710"/>
</dbReference>
<dbReference type="EnsemblPlants" id="AT3G08710.3">
    <property type="protein sequence ID" value="AT3G08710.3"/>
    <property type="gene ID" value="AT3G08710"/>
</dbReference>
<dbReference type="GeneID" id="820018"/>
<dbReference type="Gramene" id="AT3G08710.1">
    <property type="protein sequence ID" value="AT3G08710.1"/>
    <property type="gene ID" value="AT3G08710"/>
</dbReference>
<dbReference type="Gramene" id="AT3G08710.2">
    <property type="protein sequence ID" value="AT3G08710.2"/>
    <property type="gene ID" value="AT3G08710"/>
</dbReference>
<dbReference type="Gramene" id="AT3G08710.3">
    <property type="protein sequence ID" value="AT3G08710.3"/>
    <property type="gene ID" value="AT3G08710"/>
</dbReference>
<dbReference type="KEGG" id="ath:AT3G08710"/>
<dbReference type="Araport" id="AT3G08710"/>
<dbReference type="TAIR" id="AT3G08710">
    <property type="gene designation" value="TH9"/>
</dbReference>
<dbReference type="eggNOG" id="KOG0907">
    <property type="taxonomic scope" value="Eukaryota"/>
</dbReference>
<dbReference type="HOGENOM" id="CLU_090389_14_1_1"/>
<dbReference type="InParanoid" id="Q9C9Y6"/>
<dbReference type="OMA" id="VIDFCAN"/>
<dbReference type="OrthoDB" id="2121326at2759"/>
<dbReference type="PhylomeDB" id="Q9C9Y6"/>
<dbReference type="PRO" id="PR:Q9C9Y6"/>
<dbReference type="Proteomes" id="UP000006548">
    <property type="component" value="Chromosome 3"/>
</dbReference>
<dbReference type="ExpressionAtlas" id="Q9C9Y6">
    <property type="expression patterns" value="baseline and differential"/>
</dbReference>
<dbReference type="GO" id="GO:0005829">
    <property type="term" value="C:cytosol"/>
    <property type="evidence" value="ECO:0007005"/>
    <property type="project" value="TAIR"/>
</dbReference>
<dbReference type="GO" id="GO:0005886">
    <property type="term" value="C:plasma membrane"/>
    <property type="evidence" value="ECO:0000314"/>
    <property type="project" value="TAIR"/>
</dbReference>
<dbReference type="GO" id="GO:0009536">
    <property type="term" value="C:plastid"/>
    <property type="evidence" value="ECO:0000314"/>
    <property type="project" value="TAIR"/>
</dbReference>
<dbReference type="GO" id="GO:0016491">
    <property type="term" value="F:oxidoreductase activity"/>
    <property type="evidence" value="ECO:0000314"/>
    <property type="project" value="TAIR"/>
</dbReference>
<dbReference type="GO" id="GO:0007154">
    <property type="term" value="P:cell communication"/>
    <property type="evidence" value="ECO:0000314"/>
    <property type="project" value="TAIR"/>
</dbReference>
<dbReference type="CDD" id="cd02947">
    <property type="entry name" value="TRX_family"/>
    <property type="match status" value="1"/>
</dbReference>
<dbReference type="FunFam" id="3.40.30.10:FF:000313">
    <property type="entry name" value="Thioredoxin H9"/>
    <property type="match status" value="1"/>
</dbReference>
<dbReference type="Gene3D" id="3.40.30.10">
    <property type="entry name" value="Glutaredoxin"/>
    <property type="match status" value="1"/>
</dbReference>
<dbReference type="InterPro" id="IPR036249">
    <property type="entry name" value="Thioredoxin-like_sf"/>
</dbReference>
<dbReference type="InterPro" id="IPR017937">
    <property type="entry name" value="Thioredoxin_CS"/>
</dbReference>
<dbReference type="InterPro" id="IPR013766">
    <property type="entry name" value="Thioredoxin_domain"/>
</dbReference>
<dbReference type="InterPro" id="IPR050620">
    <property type="entry name" value="Thioredoxin_H-type-like"/>
</dbReference>
<dbReference type="PANTHER" id="PTHR10438">
    <property type="entry name" value="THIOREDOXIN"/>
    <property type="match status" value="1"/>
</dbReference>
<dbReference type="PANTHER" id="PTHR10438:SF434">
    <property type="entry name" value="THIOREDOXIN H9"/>
    <property type="match status" value="1"/>
</dbReference>
<dbReference type="Pfam" id="PF00085">
    <property type="entry name" value="Thioredoxin"/>
    <property type="match status" value="1"/>
</dbReference>
<dbReference type="PRINTS" id="PR00421">
    <property type="entry name" value="THIOREDOXIN"/>
</dbReference>
<dbReference type="SUPFAM" id="SSF52833">
    <property type="entry name" value="Thioredoxin-like"/>
    <property type="match status" value="1"/>
</dbReference>
<dbReference type="PROSITE" id="PS00194">
    <property type="entry name" value="THIOREDOXIN_1"/>
    <property type="match status" value="1"/>
</dbReference>
<dbReference type="PROSITE" id="PS51352">
    <property type="entry name" value="THIOREDOXIN_2"/>
    <property type="match status" value="1"/>
</dbReference>
<reference key="1">
    <citation type="journal article" date="2000" name="Nature">
        <title>Sequence and analysis of chromosome 3 of the plant Arabidopsis thaliana.</title>
        <authorList>
            <person name="Salanoubat M."/>
            <person name="Lemcke K."/>
            <person name="Rieger M."/>
            <person name="Ansorge W."/>
            <person name="Unseld M."/>
            <person name="Fartmann B."/>
            <person name="Valle G."/>
            <person name="Bloecker H."/>
            <person name="Perez-Alonso M."/>
            <person name="Obermaier B."/>
            <person name="Delseny M."/>
            <person name="Boutry M."/>
            <person name="Grivell L.A."/>
            <person name="Mache R."/>
            <person name="Puigdomenech P."/>
            <person name="De Simone V."/>
            <person name="Choisne N."/>
            <person name="Artiguenave F."/>
            <person name="Robert C."/>
            <person name="Brottier P."/>
            <person name="Wincker P."/>
            <person name="Cattolico L."/>
            <person name="Weissenbach J."/>
            <person name="Saurin W."/>
            <person name="Quetier F."/>
            <person name="Schaefer M."/>
            <person name="Mueller-Auer S."/>
            <person name="Gabel C."/>
            <person name="Fuchs M."/>
            <person name="Benes V."/>
            <person name="Wurmbach E."/>
            <person name="Drzonek H."/>
            <person name="Erfle H."/>
            <person name="Jordan N."/>
            <person name="Bangert S."/>
            <person name="Wiedelmann R."/>
            <person name="Kranz H."/>
            <person name="Voss H."/>
            <person name="Holland R."/>
            <person name="Brandt P."/>
            <person name="Nyakatura G."/>
            <person name="Vezzi A."/>
            <person name="D'Angelo M."/>
            <person name="Pallavicini A."/>
            <person name="Toppo S."/>
            <person name="Simionati B."/>
            <person name="Conrad A."/>
            <person name="Hornischer K."/>
            <person name="Kauer G."/>
            <person name="Loehnert T.-H."/>
            <person name="Nordsiek G."/>
            <person name="Reichelt J."/>
            <person name="Scharfe M."/>
            <person name="Schoen O."/>
            <person name="Bargues M."/>
            <person name="Terol J."/>
            <person name="Climent J."/>
            <person name="Navarro P."/>
            <person name="Collado C."/>
            <person name="Perez-Perez A."/>
            <person name="Ottenwaelder B."/>
            <person name="Duchemin D."/>
            <person name="Cooke R."/>
            <person name="Laudie M."/>
            <person name="Berger-Llauro C."/>
            <person name="Purnelle B."/>
            <person name="Masuy D."/>
            <person name="de Haan M."/>
            <person name="Maarse A.C."/>
            <person name="Alcaraz J.-P."/>
            <person name="Cottet A."/>
            <person name="Casacuberta E."/>
            <person name="Monfort A."/>
            <person name="Argiriou A."/>
            <person name="Flores M."/>
            <person name="Liguori R."/>
            <person name="Vitale D."/>
            <person name="Mannhaupt G."/>
            <person name="Haase D."/>
            <person name="Schoof H."/>
            <person name="Rudd S."/>
            <person name="Zaccaria P."/>
            <person name="Mewes H.-W."/>
            <person name="Mayer K.F.X."/>
            <person name="Kaul S."/>
            <person name="Town C.D."/>
            <person name="Koo H.L."/>
            <person name="Tallon L.J."/>
            <person name="Jenkins J."/>
            <person name="Rooney T."/>
            <person name="Rizzo M."/>
            <person name="Walts A."/>
            <person name="Utterback T."/>
            <person name="Fujii C.Y."/>
            <person name="Shea T.P."/>
            <person name="Creasy T.H."/>
            <person name="Haas B."/>
            <person name="Maiti R."/>
            <person name="Wu D."/>
            <person name="Peterson J."/>
            <person name="Van Aken S."/>
            <person name="Pai G."/>
            <person name="Militscher J."/>
            <person name="Sellers P."/>
            <person name="Gill J.E."/>
            <person name="Feldblyum T.V."/>
            <person name="Preuss D."/>
            <person name="Lin X."/>
            <person name="Nierman W.C."/>
            <person name="Salzberg S.L."/>
            <person name="White O."/>
            <person name="Venter J.C."/>
            <person name="Fraser C.M."/>
            <person name="Kaneko T."/>
            <person name="Nakamura Y."/>
            <person name="Sato S."/>
            <person name="Kato T."/>
            <person name="Asamizu E."/>
            <person name="Sasamoto S."/>
            <person name="Kimura T."/>
            <person name="Idesawa K."/>
            <person name="Kawashima K."/>
            <person name="Kishida Y."/>
            <person name="Kiyokawa C."/>
            <person name="Kohara M."/>
            <person name="Matsumoto M."/>
            <person name="Matsuno A."/>
            <person name="Muraki A."/>
            <person name="Nakayama S."/>
            <person name="Nakazaki N."/>
            <person name="Shinpo S."/>
            <person name="Takeuchi C."/>
            <person name="Wada T."/>
            <person name="Watanabe A."/>
            <person name="Yamada M."/>
            <person name="Yasuda M."/>
            <person name="Tabata S."/>
        </authorList>
    </citation>
    <scope>NUCLEOTIDE SEQUENCE [LARGE SCALE GENOMIC DNA]</scope>
    <source>
        <strain>cv. Columbia</strain>
    </source>
</reference>
<reference key="2">
    <citation type="journal article" date="2017" name="Plant J.">
        <title>Araport11: a complete reannotation of the Arabidopsis thaliana reference genome.</title>
        <authorList>
            <person name="Cheng C.Y."/>
            <person name="Krishnakumar V."/>
            <person name="Chan A.P."/>
            <person name="Thibaud-Nissen F."/>
            <person name="Schobel S."/>
            <person name="Town C.D."/>
        </authorList>
    </citation>
    <scope>GENOME REANNOTATION</scope>
    <source>
        <strain>cv. Columbia</strain>
    </source>
</reference>
<reference key="3">
    <citation type="submission" date="2004-03" db="EMBL/GenBank/DDBJ databases">
        <title>Arabidopsis ORF clones.</title>
        <authorList>
            <person name="Cheuk R.F."/>
            <person name="Chen H."/>
            <person name="Kim C.J."/>
            <person name="Shinn P."/>
            <person name="Carninci P."/>
            <person name="Hayashizaki Y."/>
            <person name="Ishida J."/>
            <person name="Kamiya A."/>
            <person name="Kawai J."/>
            <person name="Narusaka M."/>
            <person name="Sakurai T."/>
            <person name="Satou M."/>
            <person name="Seki M."/>
            <person name="Shinozaki K."/>
            <person name="Ecker J.R."/>
        </authorList>
    </citation>
    <scope>NUCLEOTIDE SEQUENCE [LARGE SCALE MRNA]</scope>
    <source>
        <strain>cv. Columbia</strain>
    </source>
</reference>
<reference key="4">
    <citation type="submission" date="2006-07" db="EMBL/GenBank/DDBJ databases">
        <title>Large-scale analysis of RIKEN Arabidopsis full-length (RAFL) cDNAs.</title>
        <authorList>
            <person name="Totoki Y."/>
            <person name="Seki M."/>
            <person name="Ishida J."/>
            <person name="Nakajima M."/>
            <person name="Enju A."/>
            <person name="Kamiya A."/>
            <person name="Narusaka M."/>
            <person name="Shin-i T."/>
            <person name="Nakagawa M."/>
            <person name="Sakamoto N."/>
            <person name="Oishi K."/>
            <person name="Kohara Y."/>
            <person name="Kobayashi M."/>
            <person name="Toyoda A."/>
            <person name="Sakaki Y."/>
            <person name="Sakurai T."/>
            <person name="Iida K."/>
            <person name="Akiyama K."/>
            <person name="Satou M."/>
            <person name="Toyoda T."/>
            <person name="Konagaya A."/>
            <person name="Carninci P."/>
            <person name="Kawai J."/>
            <person name="Hayashizaki Y."/>
            <person name="Shinozaki K."/>
        </authorList>
    </citation>
    <scope>NUCLEOTIDE SEQUENCE [LARGE SCALE MRNA]</scope>
    <source>
        <strain>cv. Columbia</strain>
    </source>
</reference>
<reference key="5">
    <citation type="journal article" date="2005" name="Cell. Mol. Life Sci.">
        <title>The plant thioredoxin system.</title>
        <authorList>
            <person name="Gelhaye E."/>
            <person name="Rouhier N."/>
            <person name="Navrot N."/>
            <person name="Jacquot J.P."/>
        </authorList>
    </citation>
    <scope>GENE FAMILY</scope>
    <scope>NOMENCLATURE</scope>
</reference>
<reference key="6">
    <citation type="journal article" date="2007" name="Mol. Cell. Proteomics">
        <title>Temporal analysis of sucrose-induced phosphorylation changes in plasma membrane proteins of Arabidopsis.</title>
        <authorList>
            <person name="Niittylae T."/>
            <person name="Fuglsang A.T."/>
            <person name="Palmgren M.G."/>
            <person name="Frommer W.B."/>
            <person name="Schulze W.X."/>
        </authorList>
    </citation>
    <scope>PHOSPHORYLATION [LARGE SCALE ANALYSIS] AT SER-136</scope>
    <scope>IDENTIFICATION BY MASS SPECTROMETRY [LARGE SCALE ANALYSIS]</scope>
    <source>
        <tissue>Seedling</tissue>
    </source>
</reference>
<reference key="7">
    <citation type="journal article" date="2008" name="J. Proteome Res.">
        <title>Site-specific phosphorylation profiling of Arabidopsis proteins by mass spectrometry and peptide chip analysis.</title>
        <authorList>
            <person name="de la Fuente van Bentem S."/>
            <person name="Anrather D."/>
            <person name="Dohnal I."/>
            <person name="Roitinger E."/>
            <person name="Csaszar E."/>
            <person name="Joore J."/>
            <person name="Buijnink J."/>
            <person name="Carreri A."/>
            <person name="Forzani C."/>
            <person name="Lorkovic Z.J."/>
            <person name="Barta A."/>
            <person name="Lecourieux D."/>
            <person name="Verhounig A."/>
            <person name="Jonak C."/>
            <person name="Hirt H."/>
        </authorList>
    </citation>
    <scope>PHOSPHORYLATION [LARGE SCALE ANALYSIS] AT SER-14</scope>
    <scope>IDENTIFICATION BY MASS SPECTROMETRY [LARGE SCALE ANALYSIS]</scope>
    <source>
        <tissue>Root</tissue>
    </source>
</reference>
<reference key="8">
    <citation type="journal article" date="2009" name="J. Proteomics">
        <title>Phosphoproteomic analysis of nuclei-enriched fractions from Arabidopsis thaliana.</title>
        <authorList>
            <person name="Jones A.M.E."/>
            <person name="MacLean D."/>
            <person name="Studholme D.J."/>
            <person name="Serna-Sanz A."/>
            <person name="Andreasson E."/>
            <person name="Rathjen J.P."/>
            <person name="Peck S.C."/>
        </authorList>
    </citation>
    <scope>PHOSPHORYLATION [LARGE SCALE ANALYSIS] AT SER-136</scope>
    <scope>IDENTIFICATION BY MASS SPECTROMETRY [LARGE SCALE ANALYSIS]</scope>
    <source>
        <strain>cv. Columbia</strain>
    </source>
</reference>
<reference key="9">
    <citation type="journal article" date="2009" name="Mol. Plant">
        <title>Comparative genomic study of the thioredoxin family in photosynthetic organisms with emphasis on Populus trichocarpa.</title>
        <authorList>
            <person name="Chibani K."/>
            <person name="Wingsle G."/>
            <person name="Jacquot J.P."/>
            <person name="Gelhaye E."/>
            <person name="Rouhier N."/>
        </authorList>
    </citation>
    <scope>GENE FAMILY</scope>
    <scope>NOMENCLATURE</scope>
</reference>
<reference key="10">
    <citation type="journal article" date="2009" name="Plant Physiol.">
        <title>Large-scale Arabidopsis phosphoproteome profiling reveals novel chloroplast kinase substrates and phosphorylation networks.</title>
        <authorList>
            <person name="Reiland S."/>
            <person name="Messerli G."/>
            <person name="Baerenfaller K."/>
            <person name="Gerrits B."/>
            <person name="Endler A."/>
            <person name="Grossmann J."/>
            <person name="Gruissem W."/>
            <person name="Baginsky S."/>
        </authorList>
    </citation>
    <scope>PHOSPHORYLATION [LARGE SCALE ANALYSIS] AT SER-14 AND SER-136</scope>
    <scope>IDENTIFICATION BY MASS SPECTROMETRY [LARGE SCALE ANALYSIS]</scope>
</reference>
<reference key="11">
    <citation type="journal article" date="2010" name="Proc. Natl. Acad. Sci. U.S.A.">
        <title>A membrane-associated thioredoxin required for plant growth moves from cell to cell, suggestive of a role in intercellular communication.</title>
        <authorList>
            <person name="Meng L."/>
            <person name="Wong J.H."/>
            <person name="Feldman L.J."/>
            <person name="Lemaux P.G."/>
            <person name="Buchanan B.B."/>
        </authorList>
    </citation>
    <scope>FUNCTION</scope>
    <scope>SUBCELLULAR LOCATION</scope>
    <scope>DISRUPTION PHENOTYPE</scope>
    <scope>MUTAGENESIS OF GLY-2 AND CYS-4</scope>
    <scope>MYRISTOYLATION AT GLY-2</scope>
    <scope>PALMITOYLATION AT CYS-4</scope>
</reference>